<organism>
    <name type="scientific">Pongo abelii</name>
    <name type="common">Sumatran orangutan</name>
    <name type="synonym">Pongo pygmaeus abelii</name>
    <dbReference type="NCBI Taxonomy" id="9601"/>
    <lineage>
        <taxon>Eukaryota</taxon>
        <taxon>Metazoa</taxon>
        <taxon>Chordata</taxon>
        <taxon>Craniata</taxon>
        <taxon>Vertebrata</taxon>
        <taxon>Euteleostomi</taxon>
        <taxon>Mammalia</taxon>
        <taxon>Eutheria</taxon>
        <taxon>Euarchontoglires</taxon>
        <taxon>Primates</taxon>
        <taxon>Haplorrhini</taxon>
        <taxon>Catarrhini</taxon>
        <taxon>Hominidae</taxon>
        <taxon>Pongo</taxon>
    </lineage>
</organism>
<reference key="1">
    <citation type="submission" date="2004-11" db="EMBL/GenBank/DDBJ databases">
        <authorList>
            <consortium name="The German cDNA consortium"/>
        </authorList>
    </citation>
    <scope>NUCLEOTIDE SEQUENCE [LARGE SCALE MRNA]</scope>
    <source>
        <tissue>Kidney</tissue>
    </source>
</reference>
<accession>Q5RD75</accession>
<keyword id="KW-0175">Coiled coil</keyword>
<keyword id="KW-0597">Phosphoprotein</keyword>
<keyword id="KW-1185">Reference proteome</keyword>
<evidence type="ECO:0000250" key="1">
    <source>
        <dbReference type="UniProtKB" id="Q66H34"/>
    </source>
</evidence>
<evidence type="ECO:0000250" key="2">
    <source>
        <dbReference type="UniProtKB" id="Q6ZPR1"/>
    </source>
</evidence>
<evidence type="ECO:0000250" key="3">
    <source>
        <dbReference type="UniProtKB" id="Q9P2B7"/>
    </source>
</evidence>
<evidence type="ECO:0000255" key="4"/>
<evidence type="ECO:0000256" key="5">
    <source>
        <dbReference type="SAM" id="MobiDB-lite"/>
    </source>
</evidence>
<evidence type="ECO:0000305" key="6"/>
<proteinExistence type="evidence at transcript level"/>
<name>CFA97_PONAB</name>
<dbReference type="EMBL" id="CR858041">
    <property type="protein sequence ID" value="CAH90282.1"/>
    <property type="molecule type" value="mRNA"/>
</dbReference>
<dbReference type="RefSeq" id="NP_001125128.1">
    <property type="nucleotide sequence ID" value="NM_001131656.1"/>
</dbReference>
<dbReference type="SMR" id="Q5RD75"/>
<dbReference type="FunCoup" id="Q5RD75">
    <property type="interactions" value="2508"/>
</dbReference>
<dbReference type="STRING" id="9601.ENSPPYP00000017029"/>
<dbReference type="GeneID" id="100172012"/>
<dbReference type="KEGG" id="pon:100172012"/>
<dbReference type="CTD" id="57587"/>
<dbReference type="eggNOG" id="ENOG502S0ZF">
    <property type="taxonomic scope" value="Eukaryota"/>
</dbReference>
<dbReference type="InParanoid" id="Q5RD75"/>
<dbReference type="OrthoDB" id="515313at2759"/>
<dbReference type="Proteomes" id="UP000001595">
    <property type="component" value="Unplaced"/>
</dbReference>
<dbReference type="GO" id="GO:0007283">
    <property type="term" value="P:spermatogenesis"/>
    <property type="evidence" value="ECO:0007669"/>
    <property type="project" value="TreeGrafter"/>
</dbReference>
<dbReference type="InterPro" id="IPR038791">
    <property type="entry name" value="Cfap97/Hemingway"/>
</dbReference>
<dbReference type="InterPro" id="IPR029488">
    <property type="entry name" value="Hmw/CFAP97"/>
</dbReference>
<dbReference type="PANTHER" id="PTHR23035:SF1">
    <property type="entry name" value="CILIA- AND FLAGELLA-ASSOCIATED PROTEIN 97"/>
    <property type="match status" value="1"/>
</dbReference>
<dbReference type="PANTHER" id="PTHR23035">
    <property type="entry name" value="CILIA- AND FLAGELLA-ASSOCIATED PROTEIN 97-RELATED"/>
    <property type="match status" value="1"/>
</dbReference>
<dbReference type="Pfam" id="PF13879">
    <property type="entry name" value="Hmw_CFAP97"/>
    <property type="match status" value="1"/>
</dbReference>
<feature type="chain" id="PRO_0000309226" description="Cilia- and flagella-associated protein 97" evidence="6">
    <location>
        <begin position="1"/>
        <end position="530"/>
    </location>
</feature>
<feature type="region of interest" description="Disordered" evidence="5">
    <location>
        <begin position="29"/>
        <end position="83"/>
    </location>
</feature>
<feature type="region of interest" description="Disordered" evidence="5">
    <location>
        <begin position="116"/>
        <end position="258"/>
    </location>
</feature>
<feature type="region of interest" description="Disordered" evidence="5">
    <location>
        <begin position="395"/>
        <end position="417"/>
    </location>
</feature>
<feature type="region of interest" description="Disordered" evidence="5">
    <location>
        <begin position="483"/>
        <end position="530"/>
    </location>
</feature>
<feature type="coiled-coil region" evidence="4">
    <location>
        <begin position="372"/>
        <end position="447"/>
    </location>
</feature>
<feature type="compositionally biased region" description="Basic and acidic residues" evidence="5">
    <location>
        <begin position="35"/>
        <end position="49"/>
    </location>
</feature>
<feature type="compositionally biased region" description="Polar residues" evidence="5">
    <location>
        <begin position="50"/>
        <end position="63"/>
    </location>
</feature>
<feature type="compositionally biased region" description="Basic and acidic residues" evidence="5">
    <location>
        <begin position="67"/>
        <end position="82"/>
    </location>
</feature>
<feature type="compositionally biased region" description="Acidic residues" evidence="5">
    <location>
        <begin position="129"/>
        <end position="139"/>
    </location>
</feature>
<feature type="compositionally biased region" description="Low complexity" evidence="5">
    <location>
        <begin position="170"/>
        <end position="203"/>
    </location>
</feature>
<feature type="compositionally biased region" description="Polar residues" evidence="5">
    <location>
        <begin position="227"/>
        <end position="236"/>
    </location>
</feature>
<feature type="compositionally biased region" description="Polar residues" evidence="5">
    <location>
        <begin position="491"/>
        <end position="501"/>
    </location>
</feature>
<feature type="modified residue" description="Phosphoserine" evidence="2">
    <location>
        <position position="19"/>
    </location>
</feature>
<feature type="modified residue" description="Phosphothreonine" evidence="3">
    <location>
        <position position="133"/>
    </location>
</feature>
<feature type="modified residue" description="Phosphoserine" evidence="3">
    <location>
        <position position="138"/>
    </location>
</feature>
<feature type="modified residue" description="Phosphoserine" evidence="3">
    <location>
        <position position="139"/>
    </location>
</feature>
<feature type="modified residue" description="Phosphoserine" evidence="3">
    <location>
        <position position="215"/>
    </location>
</feature>
<feature type="modified residue" description="Phosphoserine" evidence="1">
    <location>
        <position position="245"/>
    </location>
</feature>
<feature type="modified residue" description="Phosphoserine" evidence="3">
    <location>
        <position position="327"/>
    </location>
</feature>
<protein>
    <recommendedName>
        <fullName evidence="3">Cilia- and flagella-associated protein 97</fullName>
    </recommendedName>
</protein>
<gene>
    <name evidence="3" type="primary">CFAP97</name>
</gene>
<sequence>MDQFGDILEGEVDHSFFDSDFEEGKKCETNSVFDKQNDDPKERIDKDTKNVNSNTGMQTTENYLTEKGNERNVKFPPEHPVENDVTQTVSSFSLPASSRSKKLCDVTTGLKIHVSIPNRIPKIVKEGEGDYYTDGEESSDDGKKYHAKSKPAKPSTNVKKSIRKKYCKVSSSSSSSLSSSSSGSGTDCLDGGSDSHLSDSSPSSKKHVSGITLLSPKQKYKSGIKLTETQPSSTTPKCGHYPEESEDTVTDVSPLSTPDISPLQSFELGIANDQKVKVKKQENVSQEIYEDVEDLKNNSKYLKAAKKGKEKHEPDVSSKLSSVLDCSLDHRHKQKVLHDTMDLNHLLKAFLQLDKKGPQKHHFDQPSVAPGKNYSFTREEVRQIDRENQRLLKELSRQAEKPGSKSTIPRSADHPPKLYHSALSRQKEQQRIERENLALLKRLEAVKPTVGMKRSEQLMDYHRNMGYLNSSPLSRRARSTLGQYSPLRGASRTSSATSGLSCRSERSAVDPSSGHPRRRSKPPNVRTAWL</sequence>
<comment type="similarity">
    <text evidence="6">Belongs to the CFAP97 family.</text>
</comment>